<organism>
    <name type="scientific">Leuconostoc mesenteroides subsp. mesenteroides (strain ATCC 8293 / DSM 20343 / BCRC 11652 / CCM 1803 / JCM 6124 / NCDO 523 / NBRC 100496 / NCIMB 8023 / NCTC 12954 / NRRL B-1118 / 37Y)</name>
    <dbReference type="NCBI Taxonomy" id="203120"/>
    <lineage>
        <taxon>Bacteria</taxon>
        <taxon>Bacillati</taxon>
        <taxon>Bacillota</taxon>
        <taxon>Bacilli</taxon>
        <taxon>Lactobacillales</taxon>
        <taxon>Lactobacillaceae</taxon>
        <taxon>Leuconostoc</taxon>
    </lineage>
</organism>
<dbReference type="EMBL" id="CP000414">
    <property type="protein sequence ID" value="ABJ62296.1"/>
    <property type="molecule type" value="Genomic_DNA"/>
</dbReference>
<dbReference type="RefSeq" id="WP_002814686.1">
    <property type="nucleotide sequence ID" value="NC_008531.1"/>
</dbReference>
<dbReference type="SMR" id="Q03WX6"/>
<dbReference type="EnsemblBacteria" id="ABJ62296">
    <property type="protein sequence ID" value="ABJ62296"/>
    <property type="gene ID" value="LEUM_1198"/>
</dbReference>
<dbReference type="GeneID" id="29575789"/>
<dbReference type="KEGG" id="lme:LEUM_1198"/>
<dbReference type="eggNOG" id="COG0264">
    <property type="taxonomic scope" value="Bacteria"/>
</dbReference>
<dbReference type="HOGENOM" id="CLU_047155_0_2_9"/>
<dbReference type="Proteomes" id="UP000000362">
    <property type="component" value="Chromosome"/>
</dbReference>
<dbReference type="GO" id="GO:0005737">
    <property type="term" value="C:cytoplasm"/>
    <property type="evidence" value="ECO:0007669"/>
    <property type="project" value="UniProtKB-SubCell"/>
</dbReference>
<dbReference type="GO" id="GO:0003746">
    <property type="term" value="F:translation elongation factor activity"/>
    <property type="evidence" value="ECO:0007669"/>
    <property type="project" value="UniProtKB-UniRule"/>
</dbReference>
<dbReference type="CDD" id="cd14275">
    <property type="entry name" value="UBA_EF-Ts"/>
    <property type="match status" value="1"/>
</dbReference>
<dbReference type="FunFam" id="1.10.286.20:FF:000001">
    <property type="entry name" value="Elongation factor Ts"/>
    <property type="match status" value="1"/>
</dbReference>
<dbReference type="FunFam" id="1.10.8.10:FF:000001">
    <property type="entry name" value="Elongation factor Ts"/>
    <property type="match status" value="1"/>
</dbReference>
<dbReference type="Gene3D" id="1.10.286.20">
    <property type="match status" value="1"/>
</dbReference>
<dbReference type="Gene3D" id="1.10.8.10">
    <property type="entry name" value="DNA helicase RuvA subunit, C-terminal domain"/>
    <property type="match status" value="1"/>
</dbReference>
<dbReference type="Gene3D" id="3.30.479.20">
    <property type="entry name" value="Elongation factor Ts, dimerisation domain"/>
    <property type="match status" value="2"/>
</dbReference>
<dbReference type="HAMAP" id="MF_00050">
    <property type="entry name" value="EF_Ts"/>
    <property type="match status" value="1"/>
</dbReference>
<dbReference type="InterPro" id="IPR036402">
    <property type="entry name" value="EF-Ts_dimer_sf"/>
</dbReference>
<dbReference type="InterPro" id="IPR001816">
    <property type="entry name" value="Transl_elong_EFTs/EF1B"/>
</dbReference>
<dbReference type="InterPro" id="IPR014039">
    <property type="entry name" value="Transl_elong_EFTs/EF1B_dimer"/>
</dbReference>
<dbReference type="InterPro" id="IPR018101">
    <property type="entry name" value="Transl_elong_Ts_CS"/>
</dbReference>
<dbReference type="InterPro" id="IPR009060">
    <property type="entry name" value="UBA-like_sf"/>
</dbReference>
<dbReference type="NCBIfam" id="TIGR00116">
    <property type="entry name" value="tsf"/>
    <property type="match status" value="1"/>
</dbReference>
<dbReference type="PANTHER" id="PTHR11741">
    <property type="entry name" value="ELONGATION FACTOR TS"/>
    <property type="match status" value="1"/>
</dbReference>
<dbReference type="PANTHER" id="PTHR11741:SF0">
    <property type="entry name" value="ELONGATION FACTOR TS, MITOCHONDRIAL"/>
    <property type="match status" value="1"/>
</dbReference>
<dbReference type="Pfam" id="PF00889">
    <property type="entry name" value="EF_TS"/>
    <property type="match status" value="1"/>
</dbReference>
<dbReference type="SUPFAM" id="SSF54713">
    <property type="entry name" value="Elongation factor Ts (EF-Ts), dimerisation domain"/>
    <property type="match status" value="2"/>
</dbReference>
<dbReference type="SUPFAM" id="SSF46934">
    <property type="entry name" value="UBA-like"/>
    <property type="match status" value="1"/>
</dbReference>
<dbReference type="PROSITE" id="PS01126">
    <property type="entry name" value="EF_TS_1"/>
    <property type="match status" value="1"/>
</dbReference>
<gene>
    <name evidence="1" type="primary">tsf</name>
    <name type="ordered locus">LEUM_1198</name>
</gene>
<protein>
    <recommendedName>
        <fullName evidence="1">Elongation factor Ts</fullName>
        <shortName evidence="1">EF-Ts</shortName>
    </recommendedName>
</protein>
<evidence type="ECO:0000255" key="1">
    <source>
        <dbReference type="HAMAP-Rule" id="MF_00050"/>
    </source>
</evidence>
<sequence>MAITAAQVKELRDKTSVGMMDAKKALVEADGDLDKAIDLLREKGMAKAAKKGDRVAAEGMTAVAVKGNRAAIIELNSETDFVAGNAEFNELLNAVANTIVEFAPADVEAALALEVQEGQTLNDKIIGTTQITGEKITLRRFSVVEKSDSENFGSYSHLAGSISALVVVDGASEEAAKDIAMHVAAIAPQFVSDDQVPADVIAKEKEVQLASEDLNGKPDNIKERMVEGRIKKFLAEISLLDQPFVKNGDQTVAQFISSQNGSVKSFVRYQVGDGIEKQVTDLAEEVAKQLG</sequence>
<proteinExistence type="inferred from homology"/>
<name>EFTS_LEUMM</name>
<feature type="chain" id="PRO_1000006121" description="Elongation factor Ts">
    <location>
        <begin position="1"/>
        <end position="291"/>
    </location>
</feature>
<feature type="region of interest" description="Involved in Mg(2+) ion dislocation from EF-Tu" evidence="1">
    <location>
        <begin position="79"/>
        <end position="82"/>
    </location>
</feature>
<reference key="1">
    <citation type="journal article" date="2006" name="Proc. Natl. Acad. Sci. U.S.A.">
        <title>Comparative genomics of the lactic acid bacteria.</title>
        <authorList>
            <person name="Makarova K.S."/>
            <person name="Slesarev A."/>
            <person name="Wolf Y.I."/>
            <person name="Sorokin A."/>
            <person name="Mirkin B."/>
            <person name="Koonin E.V."/>
            <person name="Pavlov A."/>
            <person name="Pavlova N."/>
            <person name="Karamychev V."/>
            <person name="Polouchine N."/>
            <person name="Shakhova V."/>
            <person name="Grigoriev I."/>
            <person name="Lou Y."/>
            <person name="Rohksar D."/>
            <person name="Lucas S."/>
            <person name="Huang K."/>
            <person name="Goodstein D.M."/>
            <person name="Hawkins T."/>
            <person name="Plengvidhya V."/>
            <person name="Welker D."/>
            <person name="Hughes J."/>
            <person name="Goh Y."/>
            <person name="Benson A."/>
            <person name="Baldwin K."/>
            <person name="Lee J.-H."/>
            <person name="Diaz-Muniz I."/>
            <person name="Dosti B."/>
            <person name="Smeianov V."/>
            <person name="Wechter W."/>
            <person name="Barabote R."/>
            <person name="Lorca G."/>
            <person name="Altermann E."/>
            <person name="Barrangou R."/>
            <person name="Ganesan B."/>
            <person name="Xie Y."/>
            <person name="Rawsthorne H."/>
            <person name="Tamir D."/>
            <person name="Parker C."/>
            <person name="Breidt F."/>
            <person name="Broadbent J.R."/>
            <person name="Hutkins R."/>
            <person name="O'Sullivan D."/>
            <person name="Steele J."/>
            <person name="Unlu G."/>
            <person name="Saier M.H. Jr."/>
            <person name="Klaenhammer T."/>
            <person name="Richardson P."/>
            <person name="Kozyavkin S."/>
            <person name="Weimer B.C."/>
            <person name="Mills D.A."/>
        </authorList>
    </citation>
    <scope>NUCLEOTIDE SEQUENCE [LARGE SCALE GENOMIC DNA]</scope>
    <source>
        <strain>ATCC 8293 / DSM 20343 / BCRC 11652 / CCM 1803 / JCM 6124 / NCDO 523 / NBRC 100496 / NCIMB 8023 / NCTC 12954 / NRRL B-1118 / 37Y</strain>
    </source>
</reference>
<keyword id="KW-0963">Cytoplasm</keyword>
<keyword id="KW-0251">Elongation factor</keyword>
<keyword id="KW-0648">Protein biosynthesis</keyword>
<keyword id="KW-1185">Reference proteome</keyword>
<accession>Q03WX6</accession>
<comment type="function">
    <text evidence="1">Associates with the EF-Tu.GDP complex and induces the exchange of GDP to GTP. It remains bound to the aminoacyl-tRNA.EF-Tu.GTP complex up to the GTP hydrolysis stage on the ribosome.</text>
</comment>
<comment type="subcellular location">
    <subcellularLocation>
        <location evidence="1">Cytoplasm</location>
    </subcellularLocation>
</comment>
<comment type="similarity">
    <text evidence="1">Belongs to the EF-Ts family.</text>
</comment>